<sequence>MLAVYLHGFILSAAMILPLGPQNVFVMNQGIKRQHHLMSASLCALSDIILICAGIFGGSALLSRSPLLLALVTWGGVAFLMWYGWGALMAAWRGDGVASSATSVTQGRWRILVTLLAVTWLNPHVYLDTFVVLGSLGGQLLPDIRPWFALGAVTASIVWFFALALLAAWLSPWLNRPVAQRIINLFVGGVMGFIAFQLARQGFGL</sequence>
<protein>
    <recommendedName>
        <fullName evidence="1">Arginine exporter protein ArgO</fullName>
    </recommendedName>
</protein>
<reference key="1">
    <citation type="journal article" date="2004" name="Proc. Natl. Acad. Sci. U.S.A.">
        <title>Insights into the evolution of Yersinia pestis through whole-genome comparison with Yersinia pseudotuberculosis.</title>
        <authorList>
            <person name="Chain P.S.G."/>
            <person name="Carniel E."/>
            <person name="Larimer F.W."/>
            <person name="Lamerdin J."/>
            <person name="Stoutland P.O."/>
            <person name="Regala W.M."/>
            <person name="Georgescu A.M."/>
            <person name="Vergez L.M."/>
            <person name="Land M.L."/>
            <person name="Motin V.L."/>
            <person name="Brubaker R.R."/>
            <person name="Fowler J."/>
            <person name="Hinnebusch J."/>
            <person name="Marceau M."/>
            <person name="Medigue C."/>
            <person name="Simonet M."/>
            <person name="Chenal-Francisque V."/>
            <person name="Souza B."/>
            <person name="Dacheux D."/>
            <person name="Elliott J.M."/>
            <person name="Derbise A."/>
            <person name="Hauser L.J."/>
            <person name="Garcia E."/>
        </authorList>
    </citation>
    <scope>NUCLEOTIDE SEQUENCE [LARGE SCALE GENOMIC DNA]</scope>
    <source>
        <strain>IP32953</strain>
    </source>
</reference>
<gene>
    <name evidence="1" type="primary">argO</name>
    <name type="ordered locus">YPTB3193</name>
</gene>
<proteinExistence type="inferred from homology"/>
<organism>
    <name type="scientific">Yersinia pseudotuberculosis serotype I (strain IP32953)</name>
    <dbReference type="NCBI Taxonomy" id="273123"/>
    <lineage>
        <taxon>Bacteria</taxon>
        <taxon>Pseudomonadati</taxon>
        <taxon>Pseudomonadota</taxon>
        <taxon>Gammaproteobacteria</taxon>
        <taxon>Enterobacterales</taxon>
        <taxon>Yersiniaceae</taxon>
        <taxon>Yersinia</taxon>
    </lineage>
</organism>
<keyword id="KW-0029">Amino-acid transport</keyword>
<keyword id="KW-0997">Cell inner membrane</keyword>
<keyword id="KW-1003">Cell membrane</keyword>
<keyword id="KW-0472">Membrane</keyword>
<keyword id="KW-0812">Transmembrane</keyword>
<keyword id="KW-1133">Transmembrane helix</keyword>
<keyword id="KW-0813">Transport</keyword>
<accession>Q666Q4</accession>
<evidence type="ECO:0000255" key="1">
    <source>
        <dbReference type="HAMAP-Rule" id="MF_01901"/>
    </source>
</evidence>
<name>ARGO_YERPS</name>
<comment type="function">
    <text evidence="1">Involved in the export of arginine. Important to control the intracellular level of arginine and the correct balance between arginine and lysine.</text>
</comment>
<comment type="catalytic activity">
    <reaction evidence="1">
        <text>L-arginine(in) = L-arginine(out)</text>
        <dbReference type="Rhea" id="RHEA:32143"/>
        <dbReference type="ChEBI" id="CHEBI:32682"/>
    </reaction>
    <physiologicalReaction direction="left-to-right" evidence="1">
        <dbReference type="Rhea" id="RHEA:32144"/>
    </physiologicalReaction>
</comment>
<comment type="subcellular location">
    <subcellularLocation>
        <location evidence="1">Cell inner membrane</location>
        <topology evidence="1">Multi-pass membrane protein</topology>
    </subcellularLocation>
</comment>
<comment type="similarity">
    <text evidence="1">Belongs to the LysE/ArgO transporter (TC 2.A.75) family.</text>
</comment>
<feature type="chain" id="PRO_0000204169" description="Arginine exporter protein ArgO">
    <location>
        <begin position="1"/>
        <end position="205"/>
    </location>
</feature>
<feature type="transmembrane region" description="Helical" evidence="1">
    <location>
        <begin position="1"/>
        <end position="21"/>
    </location>
</feature>
<feature type="transmembrane region" description="Helical" evidence="1">
    <location>
        <begin position="42"/>
        <end position="62"/>
    </location>
</feature>
<feature type="transmembrane region" description="Helical" evidence="1">
    <location>
        <begin position="67"/>
        <end position="87"/>
    </location>
</feature>
<feature type="transmembrane region" description="Helical" evidence="1">
    <location>
        <begin position="111"/>
        <end position="131"/>
    </location>
</feature>
<feature type="transmembrane region" description="Helical" evidence="1">
    <location>
        <begin position="147"/>
        <end position="167"/>
    </location>
</feature>
<feature type="transmembrane region" description="Helical" evidence="1">
    <location>
        <begin position="185"/>
        <end position="205"/>
    </location>
</feature>
<dbReference type="EMBL" id="BX936398">
    <property type="protein sequence ID" value="CAH22431.1"/>
    <property type="molecule type" value="Genomic_DNA"/>
</dbReference>
<dbReference type="RefSeq" id="WP_002209960.1">
    <property type="nucleotide sequence ID" value="NZ_CP009712.1"/>
</dbReference>
<dbReference type="GeneID" id="57973722"/>
<dbReference type="KEGG" id="ypo:BZ17_3418"/>
<dbReference type="KEGG" id="yps:YPTB3193"/>
<dbReference type="PATRIC" id="fig|273123.14.peg.3587"/>
<dbReference type="Proteomes" id="UP000001011">
    <property type="component" value="Chromosome"/>
</dbReference>
<dbReference type="GO" id="GO:0005886">
    <property type="term" value="C:plasma membrane"/>
    <property type="evidence" value="ECO:0007669"/>
    <property type="project" value="UniProtKB-SubCell"/>
</dbReference>
<dbReference type="GO" id="GO:0061459">
    <property type="term" value="F:L-arginine transmembrane transporter activity"/>
    <property type="evidence" value="ECO:0007669"/>
    <property type="project" value="UniProtKB-UniRule"/>
</dbReference>
<dbReference type="HAMAP" id="MF_01901">
    <property type="entry name" value="ArgO"/>
    <property type="match status" value="1"/>
</dbReference>
<dbReference type="InterPro" id="IPR023445">
    <property type="entry name" value="Arg_export_ArgO_enterobac"/>
</dbReference>
<dbReference type="InterPro" id="IPR001123">
    <property type="entry name" value="LeuE-type"/>
</dbReference>
<dbReference type="InterPro" id="IPR004777">
    <property type="entry name" value="Lys/arg_exporter"/>
</dbReference>
<dbReference type="NCBIfam" id="TIGR00948">
    <property type="entry name" value="2a75"/>
    <property type="match status" value="1"/>
</dbReference>
<dbReference type="NCBIfam" id="NF006801">
    <property type="entry name" value="PRK09304.1"/>
    <property type="match status" value="1"/>
</dbReference>
<dbReference type="PANTHER" id="PTHR30086">
    <property type="entry name" value="ARGININE EXPORTER PROTEIN ARGO"/>
    <property type="match status" value="1"/>
</dbReference>
<dbReference type="PANTHER" id="PTHR30086:SF20">
    <property type="entry name" value="ARGININE EXPORTER PROTEIN ARGO-RELATED"/>
    <property type="match status" value="1"/>
</dbReference>
<dbReference type="Pfam" id="PF01810">
    <property type="entry name" value="LysE"/>
    <property type="match status" value="1"/>
</dbReference>